<evidence type="ECO:0000255" key="1">
    <source>
        <dbReference type="HAMAP-Rule" id="MF_01309"/>
    </source>
</evidence>
<evidence type="ECO:0000305" key="2"/>
<gene>
    <name evidence="1" type="primary">rpsC</name>
    <name type="ordered locus">RPR_06200</name>
</gene>
<accession>C4K2H3</accession>
<protein>
    <recommendedName>
        <fullName evidence="1">Small ribosomal subunit protein uS3</fullName>
    </recommendedName>
    <alternativeName>
        <fullName evidence="2">30S ribosomal protein S3</fullName>
    </alternativeName>
</protein>
<reference key="1">
    <citation type="journal article" date="2009" name="PLoS ONE">
        <title>Genome sequence of the endosymbiont Rickettsia peacockii and comparison with virulent Rickettsia rickettsii: identification of virulence factors.</title>
        <authorList>
            <person name="Felsheim R.F."/>
            <person name="Kurtti T.J."/>
            <person name="Munderloh U.G."/>
        </authorList>
    </citation>
    <scope>NUCLEOTIDE SEQUENCE [LARGE SCALE GENOMIC DNA]</scope>
    <source>
        <strain>Rustic</strain>
    </source>
</reference>
<feature type="chain" id="PRO_1000214349" description="Small ribosomal subunit protein uS3">
    <location>
        <begin position="1"/>
        <end position="217"/>
    </location>
</feature>
<feature type="domain" description="KH type-2" evidence="1">
    <location>
        <begin position="40"/>
        <end position="110"/>
    </location>
</feature>
<keyword id="KW-0687">Ribonucleoprotein</keyword>
<keyword id="KW-0689">Ribosomal protein</keyword>
<keyword id="KW-0694">RNA-binding</keyword>
<keyword id="KW-0699">rRNA-binding</keyword>
<sequence length="217" mass="24587">MGQKVCAHGFRVGPTLIKGWDSILYAEKHYKTLFIQDLKIRDLINKGFNQAQISRVLIERPSNKSIIININAKKPNIIIGRNGSEIDKLKKAIEKMTSLKEVYINIHEVRKFNIDAAIVAQTIALQLEKRVSFRKAMKTAIQASFKQGGQGIRVSCSGRLGGAEIARTEWYIEGRMPLHTLRADIDYSTAEAITTYGVIGVKVWIYKGEYTENKRYN</sequence>
<comment type="function">
    <text evidence="1">Binds the lower part of the 30S subunit head. Binds mRNA in the 70S ribosome, positioning it for translation.</text>
</comment>
<comment type="subunit">
    <text evidence="1">Part of the 30S ribosomal subunit. Forms a tight complex with proteins S10 and S14.</text>
</comment>
<comment type="similarity">
    <text evidence="1">Belongs to the universal ribosomal protein uS3 family.</text>
</comment>
<organism>
    <name type="scientific">Rickettsia peacockii (strain Rustic)</name>
    <dbReference type="NCBI Taxonomy" id="562019"/>
    <lineage>
        <taxon>Bacteria</taxon>
        <taxon>Pseudomonadati</taxon>
        <taxon>Pseudomonadota</taxon>
        <taxon>Alphaproteobacteria</taxon>
        <taxon>Rickettsiales</taxon>
        <taxon>Rickettsiaceae</taxon>
        <taxon>Rickettsieae</taxon>
        <taxon>Rickettsia</taxon>
        <taxon>spotted fever group</taxon>
    </lineage>
</organism>
<proteinExistence type="inferred from homology"/>
<name>RS3_RICPU</name>
<dbReference type="EMBL" id="CP001227">
    <property type="protein sequence ID" value="ACR47770.1"/>
    <property type="molecule type" value="Genomic_DNA"/>
</dbReference>
<dbReference type="RefSeq" id="WP_010977584.1">
    <property type="nucleotide sequence ID" value="NC_012730.1"/>
</dbReference>
<dbReference type="SMR" id="C4K2H3"/>
<dbReference type="GeneID" id="928142"/>
<dbReference type="KEGG" id="rpk:RPR_06200"/>
<dbReference type="HOGENOM" id="CLU_058591_0_2_5"/>
<dbReference type="Proteomes" id="UP000005015">
    <property type="component" value="Chromosome"/>
</dbReference>
<dbReference type="GO" id="GO:0022627">
    <property type="term" value="C:cytosolic small ribosomal subunit"/>
    <property type="evidence" value="ECO:0007669"/>
    <property type="project" value="TreeGrafter"/>
</dbReference>
<dbReference type="GO" id="GO:0003729">
    <property type="term" value="F:mRNA binding"/>
    <property type="evidence" value="ECO:0007669"/>
    <property type="project" value="UniProtKB-UniRule"/>
</dbReference>
<dbReference type="GO" id="GO:0019843">
    <property type="term" value="F:rRNA binding"/>
    <property type="evidence" value="ECO:0007669"/>
    <property type="project" value="UniProtKB-UniRule"/>
</dbReference>
<dbReference type="GO" id="GO:0003735">
    <property type="term" value="F:structural constituent of ribosome"/>
    <property type="evidence" value="ECO:0007669"/>
    <property type="project" value="InterPro"/>
</dbReference>
<dbReference type="GO" id="GO:0006412">
    <property type="term" value="P:translation"/>
    <property type="evidence" value="ECO:0007669"/>
    <property type="project" value="UniProtKB-UniRule"/>
</dbReference>
<dbReference type="CDD" id="cd02412">
    <property type="entry name" value="KH-II_30S_S3"/>
    <property type="match status" value="1"/>
</dbReference>
<dbReference type="FunFam" id="3.30.300.20:FF:000001">
    <property type="entry name" value="30S ribosomal protein S3"/>
    <property type="match status" value="1"/>
</dbReference>
<dbReference type="Gene3D" id="3.30.300.20">
    <property type="match status" value="1"/>
</dbReference>
<dbReference type="Gene3D" id="3.30.1140.32">
    <property type="entry name" value="Ribosomal protein S3, C-terminal domain"/>
    <property type="match status" value="1"/>
</dbReference>
<dbReference type="HAMAP" id="MF_01309_B">
    <property type="entry name" value="Ribosomal_uS3_B"/>
    <property type="match status" value="1"/>
</dbReference>
<dbReference type="InterPro" id="IPR004087">
    <property type="entry name" value="KH_dom"/>
</dbReference>
<dbReference type="InterPro" id="IPR015946">
    <property type="entry name" value="KH_dom-like_a/b"/>
</dbReference>
<dbReference type="InterPro" id="IPR004044">
    <property type="entry name" value="KH_dom_type_2"/>
</dbReference>
<dbReference type="InterPro" id="IPR009019">
    <property type="entry name" value="KH_sf_prok-type"/>
</dbReference>
<dbReference type="InterPro" id="IPR036419">
    <property type="entry name" value="Ribosomal_S3_C_sf"/>
</dbReference>
<dbReference type="InterPro" id="IPR005704">
    <property type="entry name" value="Ribosomal_uS3_bac-typ"/>
</dbReference>
<dbReference type="InterPro" id="IPR001351">
    <property type="entry name" value="Ribosomal_uS3_C"/>
</dbReference>
<dbReference type="InterPro" id="IPR018280">
    <property type="entry name" value="Ribosomal_uS3_CS"/>
</dbReference>
<dbReference type="NCBIfam" id="TIGR01009">
    <property type="entry name" value="rpsC_bact"/>
    <property type="match status" value="1"/>
</dbReference>
<dbReference type="PANTHER" id="PTHR11760">
    <property type="entry name" value="30S/40S RIBOSOMAL PROTEIN S3"/>
    <property type="match status" value="1"/>
</dbReference>
<dbReference type="PANTHER" id="PTHR11760:SF19">
    <property type="entry name" value="SMALL RIBOSOMAL SUBUNIT PROTEIN US3C"/>
    <property type="match status" value="1"/>
</dbReference>
<dbReference type="Pfam" id="PF07650">
    <property type="entry name" value="KH_2"/>
    <property type="match status" value="1"/>
</dbReference>
<dbReference type="Pfam" id="PF00189">
    <property type="entry name" value="Ribosomal_S3_C"/>
    <property type="match status" value="1"/>
</dbReference>
<dbReference type="SMART" id="SM00322">
    <property type="entry name" value="KH"/>
    <property type="match status" value="1"/>
</dbReference>
<dbReference type="SUPFAM" id="SSF54814">
    <property type="entry name" value="Prokaryotic type KH domain (KH-domain type II)"/>
    <property type="match status" value="1"/>
</dbReference>
<dbReference type="SUPFAM" id="SSF54821">
    <property type="entry name" value="Ribosomal protein S3 C-terminal domain"/>
    <property type="match status" value="1"/>
</dbReference>
<dbReference type="PROSITE" id="PS50823">
    <property type="entry name" value="KH_TYPE_2"/>
    <property type="match status" value="1"/>
</dbReference>
<dbReference type="PROSITE" id="PS00548">
    <property type="entry name" value="RIBOSOMAL_S3"/>
    <property type="match status" value="1"/>
</dbReference>